<accession>P37765</accession>
<sequence>MSEKLQKVLARAGHGSRREIESIIEAGRVSVDGKIAKLGDRVEVTPGLKIRIDGHLISVRESAEQICRVLAYYKPEGELCTRNDPEGRPTVFDRLPKLRGARWIAVGRLDVNTCGLLLFTTDGELANRLMHPSREVEREYAVRVFGQVDDAKLRDLSRGVQLEDGPAAFKTIKFSGGEGINQWYNVTLTEGRNREVRRLWEAVGVQVSRLIRVRYGDIPLPKGLPRGGWTELDLAQTNYLRELVELPPETSSKVAVEKDRRRMKANQIRRAVKRHSQVSGGRRSGGRNNNG</sequence>
<evidence type="ECO:0000255" key="1">
    <source>
        <dbReference type="PROSITE-ProRule" id="PRU00182"/>
    </source>
</evidence>
<evidence type="ECO:0000256" key="2">
    <source>
        <dbReference type="SAM" id="MobiDB-lite"/>
    </source>
</evidence>
<evidence type="ECO:0000269" key="3">
    <source>
    </source>
</evidence>
<evidence type="ECO:0000305" key="4"/>
<evidence type="ECO:0007829" key="5">
    <source>
        <dbReference type="PDB" id="4LGT"/>
    </source>
</evidence>
<dbReference type="EC" id="5.4.99.22"/>
<dbReference type="EMBL" id="U00096">
    <property type="protein sequence ID" value="AAC74351.1"/>
    <property type="molecule type" value="Genomic_DNA"/>
</dbReference>
<dbReference type="EMBL" id="AP009048">
    <property type="protein sequence ID" value="BAA14806.1"/>
    <property type="molecule type" value="Genomic_DNA"/>
</dbReference>
<dbReference type="EMBL" id="U18111">
    <property type="protein sequence ID" value="AAB59990.1"/>
    <property type="molecule type" value="Genomic_DNA"/>
</dbReference>
<dbReference type="EMBL" id="M21528">
    <property type="status" value="NOT_ANNOTATED_CDS"/>
    <property type="molecule type" value="Genomic_DNA"/>
</dbReference>
<dbReference type="PIR" id="H64874">
    <property type="entry name" value="H64874"/>
</dbReference>
<dbReference type="RefSeq" id="NP_415785.1">
    <property type="nucleotide sequence ID" value="NC_000913.3"/>
</dbReference>
<dbReference type="RefSeq" id="WP_001291217.1">
    <property type="nucleotide sequence ID" value="NZ_SSZK01000031.1"/>
</dbReference>
<dbReference type="PDB" id="4LAB">
    <property type="method" value="X-ray"/>
    <property type="resolution" value="2.50 A"/>
    <property type="chains" value="A=1-251"/>
</dbReference>
<dbReference type="PDB" id="4LGT">
    <property type="method" value="X-ray"/>
    <property type="resolution" value="1.30 A"/>
    <property type="chains" value="A/D=1-251"/>
</dbReference>
<dbReference type="PDB" id="9CL9">
    <property type="method" value="EM"/>
    <property type="resolution" value="5.04 A"/>
    <property type="chains" value="A=1-283"/>
</dbReference>
<dbReference type="PDBsum" id="4LAB"/>
<dbReference type="PDBsum" id="4LGT"/>
<dbReference type="PDBsum" id="9CL9"/>
<dbReference type="EMDB" id="EMD-45666"/>
<dbReference type="SMR" id="P37765"/>
<dbReference type="BioGRID" id="4259574">
    <property type="interactions" value="58"/>
</dbReference>
<dbReference type="BioGRID" id="850207">
    <property type="interactions" value="3"/>
</dbReference>
<dbReference type="DIP" id="DIP-11585N"/>
<dbReference type="FunCoup" id="P37765">
    <property type="interactions" value="508"/>
</dbReference>
<dbReference type="IntAct" id="P37765">
    <property type="interactions" value="79"/>
</dbReference>
<dbReference type="STRING" id="511145.b1269"/>
<dbReference type="jPOST" id="P37765"/>
<dbReference type="PaxDb" id="511145-b1269"/>
<dbReference type="EnsemblBacteria" id="AAC74351">
    <property type="protein sequence ID" value="AAC74351"/>
    <property type="gene ID" value="b1269"/>
</dbReference>
<dbReference type="GeneID" id="86946628"/>
<dbReference type="GeneID" id="945840"/>
<dbReference type="KEGG" id="ecj:JW1261"/>
<dbReference type="KEGG" id="eco:b1269"/>
<dbReference type="KEGG" id="ecoc:C3026_07435"/>
<dbReference type="PATRIC" id="fig|1411691.4.peg.1015"/>
<dbReference type="EchoBASE" id="EB2329"/>
<dbReference type="eggNOG" id="COG1187">
    <property type="taxonomic scope" value="Bacteria"/>
</dbReference>
<dbReference type="HOGENOM" id="CLU_024979_1_1_6"/>
<dbReference type="InParanoid" id="P37765"/>
<dbReference type="OMA" id="EWINNGW"/>
<dbReference type="OrthoDB" id="9807213at2"/>
<dbReference type="PhylomeDB" id="P37765"/>
<dbReference type="BioCyc" id="EcoCyc:EG12433-MONOMER"/>
<dbReference type="BioCyc" id="MetaCyc:EG12433-MONOMER"/>
<dbReference type="BRENDA" id="5.4.99.22">
    <property type="organism ID" value="2026"/>
</dbReference>
<dbReference type="EvolutionaryTrace" id="P37765"/>
<dbReference type="PRO" id="PR:P37765"/>
<dbReference type="Proteomes" id="UP000000625">
    <property type="component" value="Chromosome"/>
</dbReference>
<dbReference type="GO" id="GO:0005829">
    <property type="term" value="C:cytosol"/>
    <property type="evidence" value="ECO:0000314"/>
    <property type="project" value="EcoCyc"/>
</dbReference>
<dbReference type="GO" id="GO:0160139">
    <property type="term" value="F:23S rRNA pseudouridine(2605) synthase activity"/>
    <property type="evidence" value="ECO:0007669"/>
    <property type="project" value="UniProtKB-EC"/>
</dbReference>
<dbReference type="GO" id="GO:0003723">
    <property type="term" value="F:RNA binding"/>
    <property type="evidence" value="ECO:0007669"/>
    <property type="project" value="UniProtKB-KW"/>
</dbReference>
<dbReference type="GO" id="GO:0120159">
    <property type="term" value="F:rRNA pseudouridine synthase activity"/>
    <property type="evidence" value="ECO:0000315"/>
    <property type="project" value="EcoCyc"/>
</dbReference>
<dbReference type="GO" id="GO:0000455">
    <property type="term" value="P:enzyme-directed rRNA pseudouridine synthesis"/>
    <property type="evidence" value="ECO:0000315"/>
    <property type="project" value="EcoCyc"/>
</dbReference>
<dbReference type="CDD" id="cd02556">
    <property type="entry name" value="PseudoU_synth_RluB"/>
    <property type="match status" value="1"/>
</dbReference>
<dbReference type="CDD" id="cd00165">
    <property type="entry name" value="S4"/>
    <property type="match status" value="1"/>
</dbReference>
<dbReference type="FunFam" id="3.10.290.10:FF:000003">
    <property type="entry name" value="Pseudouridine synthase"/>
    <property type="match status" value="1"/>
</dbReference>
<dbReference type="FunFam" id="3.30.2350.10:FF:000002">
    <property type="entry name" value="Pseudouridine synthase"/>
    <property type="match status" value="1"/>
</dbReference>
<dbReference type="FunFam" id="3.30.70.1560:FF:000001">
    <property type="entry name" value="Pseudouridine synthase"/>
    <property type="match status" value="1"/>
</dbReference>
<dbReference type="FunFam" id="3.30.70.580:FF:000009">
    <property type="entry name" value="Pseudouridine synthase"/>
    <property type="match status" value="1"/>
</dbReference>
<dbReference type="Gene3D" id="3.30.2350.10">
    <property type="entry name" value="Pseudouridine synthase"/>
    <property type="match status" value="1"/>
</dbReference>
<dbReference type="Gene3D" id="3.10.290.10">
    <property type="entry name" value="RNA-binding S4 domain"/>
    <property type="match status" value="1"/>
</dbReference>
<dbReference type="InterPro" id="IPR020103">
    <property type="entry name" value="PsdUridine_synth_cat_dom_sf"/>
</dbReference>
<dbReference type="InterPro" id="IPR006145">
    <property type="entry name" value="PsdUridine_synth_RsuA/RluA"/>
</dbReference>
<dbReference type="InterPro" id="IPR000748">
    <property type="entry name" value="PsdUridine_synth_RsuA/RluB/E/F"/>
</dbReference>
<dbReference type="InterPro" id="IPR018496">
    <property type="entry name" value="PsdUridine_synth_RsuA/RluB_CS"/>
</dbReference>
<dbReference type="InterPro" id="IPR050343">
    <property type="entry name" value="RsuA_PseudoU_synthase"/>
</dbReference>
<dbReference type="InterPro" id="IPR002942">
    <property type="entry name" value="S4_RNA-bd"/>
</dbReference>
<dbReference type="InterPro" id="IPR036986">
    <property type="entry name" value="S4_RNA-bd_sf"/>
</dbReference>
<dbReference type="NCBIfam" id="NF007976">
    <property type="entry name" value="PRK10700.1"/>
    <property type="match status" value="1"/>
</dbReference>
<dbReference type="NCBIfam" id="TIGR00093">
    <property type="entry name" value="pseudouridine synthase"/>
    <property type="match status" value="1"/>
</dbReference>
<dbReference type="PANTHER" id="PTHR47683">
    <property type="entry name" value="PSEUDOURIDINE SYNTHASE FAMILY PROTEIN-RELATED"/>
    <property type="match status" value="1"/>
</dbReference>
<dbReference type="PANTHER" id="PTHR47683:SF3">
    <property type="entry name" value="RIBOSOMAL LARGE SUBUNIT PSEUDOURIDINE SYNTHASE B"/>
    <property type="match status" value="1"/>
</dbReference>
<dbReference type="Pfam" id="PF00849">
    <property type="entry name" value="PseudoU_synth_2"/>
    <property type="match status" value="1"/>
</dbReference>
<dbReference type="Pfam" id="PF01479">
    <property type="entry name" value="S4"/>
    <property type="match status" value="1"/>
</dbReference>
<dbReference type="SMART" id="SM00363">
    <property type="entry name" value="S4"/>
    <property type="match status" value="1"/>
</dbReference>
<dbReference type="SUPFAM" id="SSF55174">
    <property type="entry name" value="Alpha-L RNA-binding motif"/>
    <property type="match status" value="1"/>
</dbReference>
<dbReference type="SUPFAM" id="SSF55120">
    <property type="entry name" value="Pseudouridine synthase"/>
    <property type="match status" value="1"/>
</dbReference>
<dbReference type="PROSITE" id="PS01149">
    <property type="entry name" value="PSI_RSU"/>
    <property type="match status" value="1"/>
</dbReference>
<dbReference type="PROSITE" id="PS50889">
    <property type="entry name" value="S4"/>
    <property type="match status" value="1"/>
</dbReference>
<proteinExistence type="evidence at protein level"/>
<comment type="function">
    <text evidence="3">Responsible for synthesis of pseudouridine from uracil-2605 in 23S ribosomal RNA.</text>
</comment>
<comment type="catalytic activity">
    <reaction evidence="3">
        <text>uridine(2605) in 23S rRNA = pseudouridine(2605) in 23S rRNA</text>
        <dbReference type="Rhea" id="RHEA:42520"/>
        <dbReference type="Rhea" id="RHEA-COMP:10095"/>
        <dbReference type="Rhea" id="RHEA-COMP:10096"/>
        <dbReference type="ChEBI" id="CHEBI:65314"/>
        <dbReference type="ChEBI" id="CHEBI:65315"/>
        <dbReference type="EC" id="5.4.99.22"/>
    </reaction>
</comment>
<comment type="interaction">
    <interactant intactId="EBI-561550">
        <id>P37765</id>
    </interactant>
    <interactant intactId="EBI-547718">
        <id>P75864</id>
        <label>rlmL</label>
    </interactant>
    <organismsDiffer>false</organismsDiffer>
    <experiments>3</experiments>
</comment>
<comment type="interaction">
    <interactant intactId="EBI-561550">
        <id>P37765</id>
    </interactant>
    <interactant intactId="EBI-543074">
        <id>P02359</id>
        <label>rpsG</label>
    </interactant>
    <organismsDiffer>false</organismsDiffer>
    <experiments>4</experiments>
</comment>
<comment type="interaction">
    <interactant intactId="EBI-561550">
        <id>P37765</id>
    </interactant>
    <interactant intactId="EBI-546628">
        <id>P21507</id>
        <label>srmB</label>
    </interactant>
    <organismsDiffer>false</organismsDiffer>
    <experiments>6</experiments>
</comment>
<comment type="similarity">
    <text evidence="4">Belongs to the pseudouridine synthase RsuA family.</text>
</comment>
<comment type="sequence caution" evidence="4">
    <conflict type="frameshift">
        <sequence resource="EMBL" id="M21528"/>
    </conflict>
</comment>
<reference key="1">
    <citation type="journal article" date="1996" name="DNA Res.">
        <title>A 570-kb DNA sequence of the Escherichia coli K-12 genome corresponding to the 28.0-40.1 min region on the linkage map.</title>
        <authorList>
            <person name="Aiba H."/>
            <person name="Baba T."/>
            <person name="Fujita K."/>
            <person name="Hayashi K."/>
            <person name="Inada T."/>
            <person name="Isono K."/>
            <person name="Itoh T."/>
            <person name="Kasai H."/>
            <person name="Kashimoto K."/>
            <person name="Kimura S."/>
            <person name="Kitakawa M."/>
            <person name="Kitagawa M."/>
            <person name="Makino K."/>
            <person name="Miki T."/>
            <person name="Mizobuchi K."/>
            <person name="Mori H."/>
            <person name="Mori T."/>
            <person name="Motomura K."/>
            <person name="Nakade S."/>
            <person name="Nakamura Y."/>
            <person name="Nashimoto H."/>
            <person name="Nishio Y."/>
            <person name="Oshima T."/>
            <person name="Saito N."/>
            <person name="Sampei G."/>
            <person name="Seki Y."/>
            <person name="Sivasundaram S."/>
            <person name="Tagami H."/>
            <person name="Takeda J."/>
            <person name="Takemoto K."/>
            <person name="Takeuchi Y."/>
            <person name="Wada C."/>
            <person name="Yamamoto Y."/>
            <person name="Horiuchi T."/>
        </authorList>
    </citation>
    <scope>NUCLEOTIDE SEQUENCE [LARGE SCALE GENOMIC DNA]</scope>
    <source>
        <strain>K12 / W3110 / ATCC 27325 / DSM 5911</strain>
    </source>
</reference>
<reference key="2">
    <citation type="journal article" date="1997" name="Science">
        <title>The complete genome sequence of Escherichia coli K-12.</title>
        <authorList>
            <person name="Blattner F.R."/>
            <person name="Plunkett G. III"/>
            <person name="Bloch C.A."/>
            <person name="Perna N.T."/>
            <person name="Burland V."/>
            <person name="Riley M."/>
            <person name="Collado-Vides J."/>
            <person name="Glasner J.D."/>
            <person name="Rode C.K."/>
            <person name="Mayhew G.F."/>
            <person name="Gregor J."/>
            <person name="Davis N.W."/>
            <person name="Kirkpatrick H.A."/>
            <person name="Goeden M.A."/>
            <person name="Rose D.J."/>
            <person name="Mau B."/>
            <person name="Shao Y."/>
        </authorList>
    </citation>
    <scope>NUCLEOTIDE SEQUENCE [LARGE SCALE GENOMIC DNA]</scope>
    <source>
        <strain>K12 / MG1655 / ATCC 47076</strain>
    </source>
</reference>
<reference key="3">
    <citation type="journal article" date="2006" name="Mol. Syst. Biol.">
        <title>Highly accurate genome sequences of Escherichia coli K-12 strains MG1655 and W3110.</title>
        <authorList>
            <person name="Hayashi K."/>
            <person name="Morooka N."/>
            <person name="Yamamoto Y."/>
            <person name="Fujita K."/>
            <person name="Isono K."/>
            <person name="Choi S."/>
            <person name="Ohtsubo E."/>
            <person name="Baba T."/>
            <person name="Wanner B.L."/>
            <person name="Mori H."/>
            <person name="Horiuchi T."/>
        </authorList>
    </citation>
    <scope>NUCLEOTIDE SEQUENCE [LARGE SCALE GENOMIC DNA]</scope>
    <source>
        <strain>K12 / W3110 / ATCC 27325 / DSM 5911</strain>
    </source>
</reference>
<reference key="4">
    <citation type="submission" date="1994-12" db="EMBL/GenBank/DDBJ databases">
        <authorList>
            <person name="Milkman R."/>
            <person name="McKane M."/>
        </authorList>
    </citation>
    <scope>NUCLEOTIDE SEQUENCE [GENOMIC DNA] OF 1-243</scope>
    <source>
        <strain>K12 / W3110 / ATCC 27325 / DSM 5911</strain>
    </source>
</reference>
<reference key="5">
    <citation type="journal article" date="1989" name="J. Bacteriol.">
        <title>Altered cobalamin metabolism in Escherichia coli btuR mutants affects btuB gene regulation.</title>
        <authorList>
            <person name="Lundrigan M.D."/>
            <person name="Kadner R.J."/>
        </authorList>
    </citation>
    <scope>NUCLEOTIDE SEQUENCE [GENOMIC DNA] OF 217-291</scope>
    <source>
        <strain>K12</strain>
    </source>
</reference>
<reference key="6">
    <citation type="journal article" date="1994" name="Nucleic Acids Res.">
        <title>Intrinsic and extrinsic approaches for detecting genes in a bacterial genome.</title>
        <authorList>
            <person name="Borodovsky M."/>
            <person name="Rudd K.E."/>
            <person name="Koonin E.V."/>
        </authorList>
    </citation>
    <scope>IDENTIFICATION</scope>
</reference>
<reference key="7">
    <citation type="journal article" date="2001" name="RNA">
        <title>Identification and site of action of the remaining four putative pseudouridine synthases in Escherichia coli.</title>
        <authorList>
            <person name="Del Campo M."/>
            <person name="Kaya Y."/>
            <person name="Ofengand J."/>
        </authorList>
    </citation>
    <scope>FUNCTION</scope>
    <scope>CATALYTIC ACTIVITY</scope>
    <scope>MUTAGENESIS OF ASP-110</scope>
    <source>
        <strain>K12 / MG1655 / ATCC 47076</strain>
    </source>
</reference>
<protein>
    <recommendedName>
        <fullName>Ribosomal large subunit pseudouridine synthase B</fullName>
        <ecNumber>5.4.99.22</ecNumber>
    </recommendedName>
    <alternativeName>
        <fullName>23S rRNA pseudouridine(2605) synthase</fullName>
    </alternativeName>
    <alternativeName>
        <fullName>rRNA pseudouridylate synthase B</fullName>
    </alternativeName>
    <alternativeName>
        <fullName>rRNA-uridine isomerase B</fullName>
    </alternativeName>
</protein>
<gene>
    <name type="primary">rluB</name>
    <name type="synonym">yciL</name>
    <name type="ordered locus">b1269</name>
    <name type="ordered locus">JW1261</name>
</gene>
<name>RLUB_ECOLI</name>
<organism>
    <name type="scientific">Escherichia coli (strain K12)</name>
    <dbReference type="NCBI Taxonomy" id="83333"/>
    <lineage>
        <taxon>Bacteria</taxon>
        <taxon>Pseudomonadati</taxon>
        <taxon>Pseudomonadota</taxon>
        <taxon>Gammaproteobacteria</taxon>
        <taxon>Enterobacterales</taxon>
        <taxon>Enterobacteriaceae</taxon>
        <taxon>Escherichia</taxon>
    </lineage>
</organism>
<feature type="chain" id="PRO_0000099983" description="Ribosomal large subunit pseudouridine synthase B">
    <location>
        <begin position="1"/>
        <end position="291"/>
    </location>
</feature>
<feature type="domain" description="S4 RNA-binding" evidence="1">
    <location>
        <begin position="3"/>
        <end position="75"/>
    </location>
</feature>
<feature type="region of interest" description="Disordered" evidence="2">
    <location>
        <begin position="256"/>
        <end position="291"/>
    </location>
</feature>
<feature type="active site" description="Nucleophile" evidence="4">
    <location>
        <position position="110"/>
    </location>
</feature>
<feature type="mutagenesis site" description="Loss of activity." evidence="3">
    <original>D</original>
    <variation>N</variation>
    <variation>T</variation>
    <location>
        <position position="110"/>
    </location>
</feature>
<feature type="helix" evidence="5">
    <location>
        <begin position="5"/>
        <end position="11"/>
    </location>
</feature>
<feature type="helix" evidence="5">
    <location>
        <begin position="17"/>
        <end position="25"/>
    </location>
</feature>
<feature type="strand" evidence="5">
    <location>
        <begin position="29"/>
        <end position="31"/>
    </location>
</feature>
<feature type="strand" evidence="5">
    <location>
        <begin position="50"/>
        <end position="52"/>
    </location>
</feature>
<feature type="strand" evidence="5">
    <location>
        <begin position="69"/>
        <end position="74"/>
    </location>
</feature>
<feature type="turn" evidence="5">
    <location>
        <begin position="91"/>
        <end position="94"/>
    </location>
</feature>
<feature type="strand" evidence="5">
    <location>
        <begin position="99"/>
        <end position="101"/>
    </location>
</feature>
<feature type="strand" evidence="5">
    <location>
        <begin position="104"/>
        <end position="107"/>
    </location>
</feature>
<feature type="strand" evidence="5">
    <location>
        <begin position="114"/>
        <end position="121"/>
    </location>
</feature>
<feature type="helix" evidence="5">
    <location>
        <begin position="123"/>
        <end position="130"/>
    </location>
</feature>
<feature type="helix" evidence="5">
    <location>
        <begin position="132"/>
        <end position="134"/>
    </location>
</feature>
<feature type="strand" evidence="5">
    <location>
        <begin position="138"/>
        <end position="146"/>
    </location>
</feature>
<feature type="helix" evidence="5">
    <location>
        <begin position="150"/>
        <end position="158"/>
    </location>
</feature>
<feature type="strand" evidence="5">
    <location>
        <begin position="160"/>
        <end position="162"/>
    </location>
</feature>
<feature type="strand" evidence="5">
    <location>
        <begin position="165"/>
        <end position="167"/>
    </location>
</feature>
<feature type="strand" evidence="5">
    <location>
        <begin position="170"/>
        <end position="178"/>
    </location>
</feature>
<feature type="strand" evidence="5">
    <location>
        <begin position="181"/>
        <end position="190"/>
    </location>
</feature>
<feature type="helix" evidence="5">
    <location>
        <begin position="195"/>
        <end position="202"/>
    </location>
</feature>
<feature type="strand" evidence="5">
    <location>
        <begin position="206"/>
        <end position="215"/>
    </location>
</feature>
<feature type="strand" evidence="5">
    <location>
        <begin position="229"/>
        <end position="231"/>
    </location>
</feature>
<feature type="helix" evidence="5">
    <location>
        <begin position="234"/>
        <end position="243"/>
    </location>
</feature>
<keyword id="KW-0002">3D-structure</keyword>
<keyword id="KW-0413">Isomerase</keyword>
<keyword id="KW-1185">Reference proteome</keyword>
<keyword id="KW-0694">RNA-binding</keyword>
<keyword id="KW-0698">rRNA processing</keyword>